<gene>
    <name evidence="1" type="primary">rpmH</name>
    <name type="ordered locus">Mmcs_5413</name>
</gene>
<protein>
    <recommendedName>
        <fullName evidence="1">Large ribosomal subunit protein bL34</fullName>
    </recommendedName>
    <alternativeName>
        <fullName evidence="2">50S ribosomal protein L34</fullName>
    </alternativeName>
</protein>
<name>RL34_MYCSS</name>
<reference key="1">
    <citation type="submission" date="2006-06" db="EMBL/GenBank/DDBJ databases">
        <title>Complete sequence of chromosome of Mycobacterium sp. MCS.</title>
        <authorList>
            <consortium name="US DOE Joint Genome Institute"/>
            <person name="Copeland A."/>
            <person name="Lucas S."/>
            <person name="Lapidus A."/>
            <person name="Barry K."/>
            <person name="Detter J.C."/>
            <person name="Glavina del Rio T."/>
            <person name="Hammon N."/>
            <person name="Israni S."/>
            <person name="Dalin E."/>
            <person name="Tice H."/>
            <person name="Pitluck S."/>
            <person name="Martinez M."/>
            <person name="Schmutz J."/>
            <person name="Larimer F."/>
            <person name="Land M."/>
            <person name="Hauser L."/>
            <person name="Kyrpides N."/>
            <person name="Kim E."/>
            <person name="Miller C.D."/>
            <person name="Hughes J.E."/>
            <person name="Anderson A.J."/>
            <person name="Sims R.C."/>
            <person name="Richardson P."/>
        </authorList>
    </citation>
    <scope>NUCLEOTIDE SEQUENCE [LARGE SCALE GENOMIC DNA]</scope>
    <source>
        <strain>MCS</strain>
    </source>
</reference>
<dbReference type="EMBL" id="CP000384">
    <property type="protein sequence ID" value="ABG11513.1"/>
    <property type="molecule type" value="Genomic_DNA"/>
</dbReference>
<dbReference type="SMR" id="Q1B0S1"/>
<dbReference type="KEGG" id="mmc:Mmcs_5413"/>
<dbReference type="HOGENOM" id="CLU_129938_2_1_11"/>
<dbReference type="BioCyc" id="MSP164756:G1G6O-5525-MONOMER"/>
<dbReference type="GO" id="GO:1990904">
    <property type="term" value="C:ribonucleoprotein complex"/>
    <property type="evidence" value="ECO:0007669"/>
    <property type="project" value="UniProtKB-KW"/>
</dbReference>
<dbReference type="GO" id="GO:0005840">
    <property type="term" value="C:ribosome"/>
    <property type="evidence" value="ECO:0007669"/>
    <property type="project" value="UniProtKB-KW"/>
</dbReference>
<dbReference type="GO" id="GO:0003735">
    <property type="term" value="F:structural constituent of ribosome"/>
    <property type="evidence" value="ECO:0007669"/>
    <property type="project" value="InterPro"/>
</dbReference>
<dbReference type="GO" id="GO:0006412">
    <property type="term" value="P:translation"/>
    <property type="evidence" value="ECO:0007669"/>
    <property type="project" value="UniProtKB-UniRule"/>
</dbReference>
<dbReference type="FunFam" id="1.10.287.3980:FF:000001">
    <property type="entry name" value="Mitochondrial ribosomal protein L34"/>
    <property type="match status" value="1"/>
</dbReference>
<dbReference type="Gene3D" id="1.10.287.3980">
    <property type="match status" value="1"/>
</dbReference>
<dbReference type="HAMAP" id="MF_00391">
    <property type="entry name" value="Ribosomal_bL34"/>
    <property type="match status" value="1"/>
</dbReference>
<dbReference type="InterPro" id="IPR000271">
    <property type="entry name" value="Ribosomal_bL34"/>
</dbReference>
<dbReference type="InterPro" id="IPR020939">
    <property type="entry name" value="Ribosomal_bL34_CS"/>
</dbReference>
<dbReference type="NCBIfam" id="TIGR01030">
    <property type="entry name" value="rpmH_bact"/>
    <property type="match status" value="1"/>
</dbReference>
<dbReference type="PANTHER" id="PTHR14503:SF4">
    <property type="entry name" value="LARGE RIBOSOMAL SUBUNIT PROTEIN BL34M"/>
    <property type="match status" value="1"/>
</dbReference>
<dbReference type="PANTHER" id="PTHR14503">
    <property type="entry name" value="MITOCHONDRIAL RIBOSOMAL PROTEIN 34 FAMILY MEMBER"/>
    <property type="match status" value="1"/>
</dbReference>
<dbReference type="Pfam" id="PF00468">
    <property type="entry name" value="Ribosomal_L34"/>
    <property type="match status" value="1"/>
</dbReference>
<dbReference type="PROSITE" id="PS00784">
    <property type="entry name" value="RIBOSOMAL_L34"/>
    <property type="match status" value="1"/>
</dbReference>
<keyword id="KW-0687">Ribonucleoprotein</keyword>
<keyword id="KW-0689">Ribosomal protein</keyword>
<feature type="chain" id="PRO_1000013379" description="Large ribosomal subunit protein bL34">
    <location>
        <begin position="1"/>
        <end position="47"/>
    </location>
</feature>
<proteinExistence type="inferred from homology"/>
<sequence length="47" mass="5563">MAKGKRTFQPNNRRRARVHGFRLRMRTRAGRAIVTGRRRKGRRSLTA</sequence>
<evidence type="ECO:0000255" key="1">
    <source>
        <dbReference type="HAMAP-Rule" id="MF_00391"/>
    </source>
</evidence>
<evidence type="ECO:0000305" key="2"/>
<organism>
    <name type="scientific">Mycobacterium sp. (strain MCS)</name>
    <dbReference type="NCBI Taxonomy" id="164756"/>
    <lineage>
        <taxon>Bacteria</taxon>
        <taxon>Bacillati</taxon>
        <taxon>Actinomycetota</taxon>
        <taxon>Actinomycetes</taxon>
        <taxon>Mycobacteriales</taxon>
        <taxon>Mycobacteriaceae</taxon>
        <taxon>Mycobacterium</taxon>
    </lineage>
</organism>
<accession>Q1B0S1</accession>
<comment type="similarity">
    <text evidence="1">Belongs to the bacterial ribosomal protein bL34 family.</text>
</comment>